<feature type="chain" id="PRO_0000366130" description="Mitogen-activated protein kinase kinase kinase 13-B">
    <location>
        <begin position="1"/>
        <end position="961"/>
    </location>
</feature>
<feature type="domain" description="Protein kinase" evidence="3">
    <location>
        <begin position="171"/>
        <end position="412"/>
    </location>
</feature>
<feature type="region of interest" description="Disordered" evidence="5">
    <location>
        <begin position="89"/>
        <end position="115"/>
    </location>
</feature>
<feature type="region of interest" description="Leucine-zipper 1">
    <location>
        <begin position="436"/>
        <end position="457"/>
    </location>
</feature>
<feature type="region of interest" description="Leucine-zipper 2">
    <location>
        <begin position="489"/>
        <end position="510"/>
    </location>
</feature>
<feature type="region of interest" description="Disordered" evidence="5">
    <location>
        <begin position="507"/>
        <end position="644"/>
    </location>
</feature>
<feature type="region of interest" description="Disordered" evidence="5">
    <location>
        <begin position="796"/>
        <end position="874"/>
    </location>
</feature>
<feature type="region of interest" description="Acidic" evidence="1">
    <location>
        <begin position="814"/>
        <end position="827"/>
    </location>
</feature>
<feature type="region of interest" description="Disordered" evidence="5">
    <location>
        <begin position="933"/>
        <end position="961"/>
    </location>
</feature>
<feature type="coiled-coil region" evidence="2">
    <location>
        <begin position="460"/>
        <end position="497"/>
    </location>
</feature>
<feature type="compositionally biased region" description="Low complexity" evidence="5">
    <location>
        <begin position="101"/>
        <end position="114"/>
    </location>
</feature>
<feature type="compositionally biased region" description="Low complexity" evidence="5">
    <location>
        <begin position="563"/>
        <end position="580"/>
    </location>
</feature>
<feature type="compositionally biased region" description="Basic residues" evidence="5">
    <location>
        <begin position="586"/>
        <end position="598"/>
    </location>
</feature>
<feature type="compositionally biased region" description="Low complexity" evidence="5">
    <location>
        <begin position="613"/>
        <end position="628"/>
    </location>
</feature>
<feature type="compositionally biased region" description="Acidic residues" evidence="5">
    <location>
        <begin position="813"/>
        <end position="826"/>
    </location>
</feature>
<feature type="compositionally biased region" description="Polar residues" evidence="5">
    <location>
        <begin position="839"/>
        <end position="854"/>
    </location>
</feature>
<feature type="compositionally biased region" description="Acidic residues" evidence="5">
    <location>
        <begin position="934"/>
        <end position="945"/>
    </location>
</feature>
<feature type="compositionally biased region" description="Polar residues" evidence="5">
    <location>
        <begin position="949"/>
        <end position="961"/>
    </location>
</feature>
<feature type="active site" description="Proton acceptor" evidence="3 4">
    <location>
        <position position="282"/>
    </location>
</feature>
<feature type="binding site" evidence="3">
    <location>
        <begin position="177"/>
        <end position="185"/>
    </location>
    <ligand>
        <name>ATP</name>
        <dbReference type="ChEBI" id="CHEBI:30616"/>
    </ligand>
</feature>
<feature type="binding site" evidence="3">
    <location>
        <position position="198"/>
    </location>
    <ligand>
        <name>ATP</name>
        <dbReference type="ChEBI" id="CHEBI:30616"/>
    </ligand>
</feature>
<dbReference type="EC" id="2.7.11.25"/>
<dbReference type="EMBL" id="DQ862004">
    <property type="protein sequence ID" value="ABK15542.1"/>
    <property type="molecule type" value="mRNA"/>
</dbReference>
<dbReference type="SMR" id="A7J1T0"/>
<dbReference type="GeneID" id="100337577"/>
<dbReference type="KEGG" id="xla:100337577"/>
<dbReference type="AGR" id="Xenbase:XB-GENE-6464340"/>
<dbReference type="CTD" id="100337577"/>
<dbReference type="Xenbase" id="XB-GENE-6464340">
    <property type="gene designation" value="map3k13.S"/>
</dbReference>
<dbReference type="OMA" id="MHLNDIM"/>
<dbReference type="OrthoDB" id="339325at2759"/>
<dbReference type="Proteomes" id="UP000186698">
    <property type="component" value="Chromosome 9_10S"/>
</dbReference>
<dbReference type="Bgee" id="100337577">
    <property type="expression patterns" value="Expressed in liver and 9 other cell types or tissues"/>
</dbReference>
<dbReference type="GO" id="GO:0005737">
    <property type="term" value="C:cytoplasm"/>
    <property type="evidence" value="ECO:0000318"/>
    <property type="project" value="GO_Central"/>
</dbReference>
<dbReference type="GO" id="GO:0016020">
    <property type="term" value="C:membrane"/>
    <property type="evidence" value="ECO:0007669"/>
    <property type="project" value="UniProtKB-SubCell"/>
</dbReference>
<dbReference type="GO" id="GO:0005524">
    <property type="term" value="F:ATP binding"/>
    <property type="evidence" value="ECO:0007669"/>
    <property type="project" value="UniProtKB-KW"/>
</dbReference>
<dbReference type="GO" id="GO:0004709">
    <property type="term" value="F:MAP kinase kinase kinase activity"/>
    <property type="evidence" value="ECO:0007669"/>
    <property type="project" value="UniProtKB-EC"/>
</dbReference>
<dbReference type="GO" id="GO:0106310">
    <property type="term" value="F:protein serine kinase activity"/>
    <property type="evidence" value="ECO:0007669"/>
    <property type="project" value="RHEA"/>
</dbReference>
<dbReference type="GO" id="GO:0004674">
    <property type="term" value="F:protein serine/threonine kinase activity"/>
    <property type="evidence" value="ECO:0000318"/>
    <property type="project" value="GO_Central"/>
</dbReference>
<dbReference type="GO" id="GO:0007254">
    <property type="term" value="P:JNK cascade"/>
    <property type="evidence" value="ECO:0000318"/>
    <property type="project" value="GO_Central"/>
</dbReference>
<dbReference type="GO" id="GO:0060255">
    <property type="term" value="P:regulation of macromolecule metabolic process"/>
    <property type="evidence" value="ECO:0007669"/>
    <property type="project" value="UniProtKB-ARBA"/>
</dbReference>
<dbReference type="GO" id="GO:0080090">
    <property type="term" value="P:regulation of primary metabolic process"/>
    <property type="evidence" value="ECO:0007669"/>
    <property type="project" value="UniProtKB-ARBA"/>
</dbReference>
<dbReference type="CDD" id="cd14059">
    <property type="entry name" value="STKc_MAP3K12_13"/>
    <property type="match status" value="1"/>
</dbReference>
<dbReference type="FunFam" id="1.10.510.10:FF:000087">
    <property type="entry name" value="Mitogen-activated protein kinase kinase kinase 12"/>
    <property type="match status" value="1"/>
</dbReference>
<dbReference type="FunFam" id="3.30.200.20:FF:000095">
    <property type="entry name" value="Mitogen-activated protein kinase kinase kinase 12"/>
    <property type="match status" value="1"/>
</dbReference>
<dbReference type="Gene3D" id="3.30.200.20">
    <property type="entry name" value="Phosphorylase Kinase, domain 1"/>
    <property type="match status" value="1"/>
</dbReference>
<dbReference type="Gene3D" id="1.10.510.10">
    <property type="entry name" value="Transferase(Phosphotransferase) domain 1"/>
    <property type="match status" value="1"/>
</dbReference>
<dbReference type="InterPro" id="IPR011009">
    <property type="entry name" value="Kinase-like_dom_sf"/>
</dbReference>
<dbReference type="InterPro" id="IPR017419">
    <property type="entry name" value="MAP3K12_MAP3K13"/>
</dbReference>
<dbReference type="InterPro" id="IPR000719">
    <property type="entry name" value="Prot_kinase_dom"/>
</dbReference>
<dbReference type="InterPro" id="IPR001245">
    <property type="entry name" value="Ser-Thr/Tyr_kinase_cat_dom"/>
</dbReference>
<dbReference type="InterPro" id="IPR008271">
    <property type="entry name" value="Ser/Thr_kinase_AS"/>
</dbReference>
<dbReference type="InterPro" id="IPR051681">
    <property type="entry name" value="Ser/Thr_Kinases-Pseudokinases"/>
</dbReference>
<dbReference type="PANTHER" id="PTHR44329:SF14">
    <property type="entry name" value="MITOGEN-ACTIVATED PROTEIN KINASE KINASE KINASE 13"/>
    <property type="match status" value="1"/>
</dbReference>
<dbReference type="PANTHER" id="PTHR44329">
    <property type="entry name" value="SERINE/THREONINE-PROTEIN KINASE TNNI3K-RELATED"/>
    <property type="match status" value="1"/>
</dbReference>
<dbReference type="Pfam" id="PF07714">
    <property type="entry name" value="PK_Tyr_Ser-Thr"/>
    <property type="match status" value="1"/>
</dbReference>
<dbReference type="PIRSF" id="PIRSF038165">
    <property type="entry name" value="MAPKKK12_MAPKKK13"/>
    <property type="match status" value="1"/>
</dbReference>
<dbReference type="PRINTS" id="PR00109">
    <property type="entry name" value="TYRKINASE"/>
</dbReference>
<dbReference type="SMART" id="SM00220">
    <property type="entry name" value="S_TKc"/>
    <property type="match status" value="1"/>
</dbReference>
<dbReference type="SUPFAM" id="SSF56112">
    <property type="entry name" value="Protein kinase-like (PK-like)"/>
    <property type="match status" value="1"/>
</dbReference>
<dbReference type="PROSITE" id="PS50011">
    <property type="entry name" value="PROTEIN_KINASE_DOM"/>
    <property type="match status" value="1"/>
</dbReference>
<dbReference type="PROSITE" id="PS00108">
    <property type="entry name" value="PROTEIN_KINASE_ST"/>
    <property type="match status" value="1"/>
</dbReference>
<sequence length="961" mass="107570">MHLNDIMASPHEPLNWSSSPNLIVDTIQEDKDYRVDYGDCTTIGHHEIKETPDKCDFLDNTNSPVNATVLNSISEDSRDQFENSVLQLRDQDEPENTAPQGSSHSGDGGNNSANEDIRIHFSRSRSGSGNGGFLEGLFGCLRPVWNIIGKAYSTDYKLQQQDTWEVPFEEISELQWLGSGAQGAVFLGKFRGEEVAIKKVREQKETDIKHLRKLKHPNIIAFKGVCTQAPCYCILMEYCAQGQLYEVLRAGRKVTPKLLVEWSTGIASGMNYLHLHKIIHRDLKSPNVLVTHADTVKISDFGTSKELSDKSTKMSFAGTVAWMAPEVIRNEPVSEKVDIWSFGVLLWELLTGEIPYKDVDSSAIIWGVGSNSLHLPVPSTCPDGFKILMKQTWQSKPRNRPSFRQILMHLDIAAADVLGTPQETYFKSQAEWREEVKKHFEKIKSEGTCIHRLDEELIRRRREELRHALDIREHYERKLERANNLYMELSSIMLQLEVREKELTRREQTVEKKYPGTYKRHPVRPIVHPNSFEKLIKKKGPPSRVPSQSKRPDLLKSDGIVNAEGSAASASPISGSPKTSSGGGKGRYRSKPRHRRGNSKGSHADFVGVLKYQESPAPSQQSSQHQTPASPPVTPCSPYHETSQVMPTRHQTLNVHGQNIANCANNLRYFGPAAALRSPLSSHAHRRMSGFSPDLLSSTLEADSRIQPEREYEYCEQHPYNPSQGCTETSVQHDIDTENLNNTNVVTAEYRTSDGDLPDSPRHNLVQEDYEKLETGGEQFSSLKAAVGVSALTVPTPPALPRRIHTLRKNGDDSSEGEEGEVDSEVEFPRRHRPPRGMSTCQSYSTFSSENFSVSDGEEGNTSDHSNSPDDVACGNKVWQVDKLDDLLSQTPEIPIEISMQSDGLSDKECAVRRVKTQMSLGKLCPEEHNYENAESDCDSSEGECSDATVRTNNPVNSSTW</sequence>
<proteinExistence type="evidence at transcript level"/>
<keyword id="KW-0067">ATP-binding</keyword>
<keyword id="KW-0175">Coiled coil</keyword>
<keyword id="KW-0963">Cytoplasm</keyword>
<keyword id="KW-0418">Kinase</keyword>
<keyword id="KW-0472">Membrane</keyword>
<keyword id="KW-0547">Nucleotide-binding</keyword>
<keyword id="KW-1185">Reference proteome</keyword>
<keyword id="KW-0677">Repeat</keyword>
<keyword id="KW-0723">Serine/threonine-protein kinase</keyword>
<keyword id="KW-0808">Transferase</keyword>
<gene>
    <name type="primary">map3k13-b</name>
</gene>
<organism>
    <name type="scientific">Xenopus laevis</name>
    <name type="common">African clawed frog</name>
    <dbReference type="NCBI Taxonomy" id="8355"/>
    <lineage>
        <taxon>Eukaryota</taxon>
        <taxon>Metazoa</taxon>
        <taxon>Chordata</taxon>
        <taxon>Craniata</taxon>
        <taxon>Vertebrata</taxon>
        <taxon>Euteleostomi</taxon>
        <taxon>Amphibia</taxon>
        <taxon>Batrachia</taxon>
        <taxon>Anura</taxon>
        <taxon>Pipoidea</taxon>
        <taxon>Pipidae</taxon>
        <taxon>Xenopodinae</taxon>
        <taxon>Xenopus</taxon>
        <taxon>Xenopus</taxon>
    </lineage>
</organism>
<comment type="function">
    <text evidence="1">May have a role in the JNK signaling pathway.</text>
</comment>
<comment type="catalytic activity">
    <reaction>
        <text>L-seryl-[protein] + ATP = O-phospho-L-seryl-[protein] + ADP + H(+)</text>
        <dbReference type="Rhea" id="RHEA:17989"/>
        <dbReference type="Rhea" id="RHEA-COMP:9863"/>
        <dbReference type="Rhea" id="RHEA-COMP:11604"/>
        <dbReference type="ChEBI" id="CHEBI:15378"/>
        <dbReference type="ChEBI" id="CHEBI:29999"/>
        <dbReference type="ChEBI" id="CHEBI:30616"/>
        <dbReference type="ChEBI" id="CHEBI:83421"/>
        <dbReference type="ChEBI" id="CHEBI:456216"/>
        <dbReference type="EC" id="2.7.11.25"/>
    </reaction>
</comment>
<comment type="catalytic activity">
    <reaction>
        <text>L-threonyl-[protein] + ATP = O-phospho-L-threonyl-[protein] + ADP + H(+)</text>
        <dbReference type="Rhea" id="RHEA:46608"/>
        <dbReference type="Rhea" id="RHEA-COMP:11060"/>
        <dbReference type="Rhea" id="RHEA-COMP:11605"/>
        <dbReference type="ChEBI" id="CHEBI:15378"/>
        <dbReference type="ChEBI" id="CHEBI:30013"/>
        <dbReference type="ChEBI" id="CHEBI:30616"/>
        <dbReference type="ChEBI" id="CHEBI:61977"/>
        <dbReference type="ChEBI" id="CHEBI:456216"/>
        <dbReference type="EC" id="2.7.11.25"/>
    </reaction>
</comment>
<comment type="subcellular location">
    <subcellularLocation>
        <location>Cytoplasm</location>
    </subcellularLocation>
    <subcellularLocation>
        <location evidence="1">Membrane</location>
        <topology evidence="1">Peripheral membrane protein</topology>
    </subcellularLocation>
</comment>
<comment type="similarity">
    <text evidence="3">Belongs to the protein kinase superfamily. Ser/Thr protein kinase family.</text>
</comment>
<evidence type="ECO:0000250" key="1"/>
<evidence type="ECO:0000255" key="2"/>
<evidence type="ECO:0000255" key="3">
    <source>
        <dbReference type="PROSITE-ProRule" id="PRU00159"/>
    </source>
</evidence>
<evidence type="ECO:0000255" key="4">
    <source>
        <dbReference type="PROSITE-ProRule" id="PRU10027"/>
    </source>
</evidence>
<evidence type="ECO:0000256" key="5">
    <source>
        <dbReference type="SAM" id="MobiDB-lite"/>
    </source>
</evidence>
<name>M313B_XENLA</name>
<accession>A7J1T0</accession>
<protein>
    <recommendedName>
        <fullName>Mitogen-activated protein kinase kinase kinase 13-B</fullName>
        <ecNumber>2.7.11.25</ecNumber>
    </recommendedName>
</protein>
<reference key="1">
    <citation type="submission" date="2006-07" db="EMBL/GenBank/DDBJ databases">
        <authorList>
            <person name="Itoh A."/>
            <person name="Ryan K."/>
            <person name="Itoh T."/>
        </authorList>
    </citation>
    <scope>NUCLEOTIDE SEQUENCE [MRNA]</scope>
    <source>
        <strain>xLZK-B_20703</strain>
    </source>
</reference>